<reference key="1">
    <citation type="journal article" date="2005" name="Mol. Biol. Evol.">
        <title>Evolution of bitter taste receptors in humans and apes.</title>
        <authorList>
            <person name="Fischer A."/>
            <person name="Gilad Y."/>
            <person name="Man O."/>
            <person name="Paeaebo S."/>
        </authorList>
    </citation>
    <scope>NUCLEOTIDE SEQUENCE [GENOMIC DNA]</scope>
</reference>
<proteinExistence type="inferred from homology"/>
<keyword id="KW-0297">G-protein coupled receptor</keyword>
<keyword id="KW-0325">Glycoprotein</keyword>
<keyword id="KW-0472">Membrane</keyword>
<keyword id="KW-0675">Receptor</keyword>
<keyword id="KW-1185">Reference proteome</keyword>
<keyword id="KW-0716">Sensory transduction</keyword>
<keyword id="KW-0919">Taste</keyword>
<keyword id="KW-0807">Transducer</keyword>
<keyword id="KW-0812">Transmembrane</keyword>
<keyword id="KW-1133">Transmembrane helix</keyword>
<feature type="chain" id="PRO_0000082214" description="Taste receptor type 2 member 5">
    <location>
        <begin position="1"/>
        <end position="299"/>
    </location>
</feature>
<feature type="topological domain" description="Extracellular" evidence="2">
    <location>
        <position position="1"/>
    </location>
</feature>
<feature type="transmembrane region" description="Helical; Name=1" evidence="2">
    <location>
        <begin position="2"/>
        <end position="22"/>
    </location>
</feature>
<feature type="topological domain" description="Cytoplasmic" evidence="2">
    <location>
        <begin position="23"/>
        <end position="45"/>
    </location>
</feature>
<feature type="transmembrane region" description="Helical; Name=2" evidence="2">
    <location>
        <begin position="46"/>
        <end position="66"/>
    </location>
</feature>
<feature type="topological domain" description="Extracellular" evidence="2">
    <location>
        <begin position="67"/>
        <end position="82"/>
    </location>
</feature>
<feature type="transmembrane region" description="Helical; Name=3" evidence="2">
    <location>
        <begin position="83"/>
        <end position="103"/>
    </location>
</feature>
<feature type="topological domain" description="Cytoplasmic" evidence="2">
    <location>
        <begin position="104"/>
        <end position="127"/>
    </location>
</feature>
<feature type="transmembrane region" description="Helical; Name=4" evidence="2">
    <location>
        <begin position="128"/>
        <end position="148"/>
    </location>
</feature>
<feature type="topological domain" description="Extracellular" evidence="2">
    <location>
        <begin position="149"/>
        <end position="175"/>
    </location>
</feature>
<feature type="transmembrane region" description="Helical; Name=5" evidence="2">
    <location>
        <begin position="176"/>
        <end position="196"/>
    </location>
</feature>
<feature type="topological domain" description="Cytoplasmic" evidence="2">
    <location>
        <begin position="197"/>
        <end position="223"/>
    </location>
</feature>
<feature type="transmembrane region" description="Helical; Name=6" evidence="2">
    <location>
        <begin position="224"/>
        <end position="244"/>
    </location>
</feature>
<feature type="topological domain" description="Extracellular" evidence="2">
    <location>
        <begin position="245"/>
        <end position="253"/>
    </location>
</feature>
<feature type="transmembrane region" description="Helical; Name=7" evidence="2">
    <location>
        <begin position="254"/>
        <end position="274"/>
    </location>
</feature>
<feature type="topological domain" description="Cytoplasmic" evidence="2">
    <location>
        <begin position="275"/>
        <end position="299"/>
    </location>
</feature>
<feature type="glycosylation site" description="N-linked (GlcNAc...) asparagine" evidence="2">
    <location>
        <position position="155"/>
    </location>
</feature>
<comment type="function">
    <text evidence="1">Receptor that may play a role in the perception of bitterness and is gustducin-linked. May play a role in sensing the chemical composition of the gastrointestinal content. The activity of this receptor may stimulate alpha gustducin, mediate PLC-beta-2 activation and lead to the gating of TRPM5 (By similarity).</text>
</comment>
<comment type="subcellular location">
    <subcellularLocation>
        <location>Membrane</location>
        <topology>Multi-pass membrane protein</topology>
    </subcellularLocation>
</comment>
<comment type="miscellaneous">
    <text>Most taste cells may be activated by a limited number of bitter compounds; individual taste cells can discriminate among bitter stimuli.</text>
</comment>
<comment type="similarity">
    <text evidence="3">Belongs to the G-protein coupled receptor T2R family.</text>
</comment>
<sequence>MLSAGLGLLMLVAVVEFLIGLIGNGVLVVWSFREWIRKFSWSSYNLIILGLAGCRFVLQWLIILDLSLFPLFQSSRWLRYLSIFWVLVSQASLWFATFLSVFYCKKITTFDHPAYLWLKQRAYNLSLWCLLGYFIINLLLTVQIGLMFYHPPQGNSSIRYPFESWQYLYAFRLNSGSYLPLMVFLVSSGMLIVSLYTHHKKMKVHSAGRRDVRAKAHITALKSLGCFLLLHLVYIMASPFSIASKTYPPDLTSVFIWETLMAAYPSLHSLILIMGIPRVKQTCQKIXWKTVCARRCWGP</sequence>
<name>TA2R5_PANTR</name>
<protein>
    <recommendedName>
        <fullName>Taste receptor type 2 member 5</fullName>
        <shortName>T2R5</shortName>
    </recommendedName>
</protein>
<dbReference type="EMBL" id="AY724902">
    <property type="protein sequence ID" value="AAU21115.1"/>
    <property type="molecule type" value="Genomic_DNA"/>
</dbReference>
<dbReference type="RefSeq" id="NP_001009104.1">
    <property type="nucleotide sequence ID" value="NM_001009104.1"/>
</dbReference>
<dbReference type="FunCoup" id="Q646A4">
    <property type="interactions" value="182"/>
</dbReference>
<dbReference type="STRING" id="9598.ENSPTRP00000033882"/>
<dbReference type="GlyCosmos" id="Q646A4">
    <property type="glycosylation" value="1 site, No reported glycans"/>
</dbReference>
<dbReference type="PaxDb" id="9598-ENSPTRP00000033882"/>
<dbReference type="GeneID" id="463786"/>
<dbReference type="KEGG" id="ptr:463786"/>
<dbReference type="CTD" id="54429"/>
<dbReference type="eggNOG" id="ENOG502S2SI">
    <property type="taxonomic scope" value="Eukaryota"/>
</dbReference>
<dbReference type="InParanoid" id="Q646A4"/>
<dbReference type="OrthoDB" id="13610at9604"/>
<dbReference type="Proteomes" id="UP000002277">
    <property type="component" value="Unplaced"/>
</dbReference>
<dbReference type="GO" id="GO:0016020">
    <property type="term" value="C:membrane"/>
    <property type="evidence" value="ECO:0000318"/>
    <property type="project" value="GO_Central"/>
</dbReference>
<dbReference type="GO" id="GO:0005886">
    <property type="term" value="C:plasma membrane"/>
    <property type="evidence" value="ECO:0007669"/>
    <property type="project" value="UniProtKB-ARBA"/>
</dbReference>
<dbReference type="GO" id="GO:0033038">
    <property type="term" value="F:bitter taste receptor activity"/>
    <property type="evidence" value="ECO:0000318"/>
    <property type="project" value="GO_Central"/>
</dbReference>
<dbReference type="GO" id="GO:0004930">
    <property type="term" value="F:G protein-coupled receptor activity"/>
    <property type="evidence" value="ECO:0007669"/>
    <property type="project" value="UniProtKB-KW"/>
</dbReference>
<dbReference type="GO" id="GO:0001580">
    <property type="term" value="P:detection of chemical stimulus involved in sensory perception of bitter taste"/>
    <property type="evidence" value="ECO:0000318"/>
    <property type="project" value="GO_Central"/>
</dbReference>
<dbReference type="CDD" id="cd13950">
    <property type="entry name" value="7tm_TAS2R"/>
    <property type="match status" value="1"/>
</dbReference>
<dbReference type="FunFam" id="1.20.1070.10:FF:000055">
    <property type="entry name" value="Taste receptor type 2"/>
    <property type="match status" value="1"/>
</dbReference>
<dbReference type="Gene3D" id="1.20.1070.10">
    <property type="entry name" value="Rhodopsin 7-helix transmembrane proteins"/>
    <property type="match status" value="1"/>
</dbReference>
<dbReference type="InterPro" id="IPR007960">
    <property type="entry name" value="TAS2R"/>
</dbReference>
<dbReference type="PANTHER" id="PTHR11394">
    <property type="entry name" value="TASTE RECEPTOR TYPE 2"/>
    <property type="match status" value="1"/>
</dbReference>
<dbReference type="PANTHER" id="PTHR11394:SF8">
    <property type="entry name" value="TASTE RECEPTOR TYPE 2 MEMBER 5"/>
    <property type="match status" value="1"/>
</dbReference>
<dbReference type="Pfam" id="PF05296">
    <property type="entry name" value="TAS2R"/>
    <property type="match status" value="1"/>
</dbReference>
<dbReference type="SUPFAM" id="SSF81321">
    <property type="entry name" value="Family A G protein-coupled receptor-like"/>
    <property type="match status" value="1"/>
</dbReference>
<accession>Q646A4</accession>
<gene>
    <name type="primary">TAS2R5</name>
</gene>
<organism>
    <name type="scientific">Pan troglodytes</name>
    <name type="common">Chimpanzee</name>
    <dbReference type="NCBI Taxonomy" id="9598"/>
    <lineage>
        <taxon>Eukaryota</taxon>
        <taxon>Metazoa</taxon>
        <taxon>Chordata</taxon>
        <taxon>Craniata</taxon>
        <taxon>Vertebrata</taxon>
        <taxon>Euteleostomi</taxon>
        <taxon>Mammalia</taxon>
        <taxon>Eutheria</taxon>
        <taxon>Euarchontoglires</taxon>
        <taxon>Primates</taxon>
        <taxon>Haplorrhini</taxon>
        <taxon>Catarrhini</taxon>
        <taxon>Hominidae</taxon>
        <taxon>Pan</taxon>
    </lineage>
</organism>
<evidence type="ECO:0000250" key="1"/>
<evidence type="ECO:0000255" key="2"/>
<evidence type="ECO:0000305" key="3"/>